<dbReference type="EC" id="3.4.21.-"/>
<dbReference type="PIR" id="A60489">
    <property type="entry name" value="A60489"/>
</dbReference>
<dbReference type="MEROPS" id="S01.178"/>
<dbReference type="SABIO-RK" id="P33588"/>
<dbReference type="GO" id="GO:0005576">
    <property type="term" value="C:extracellular region"/>
    <property type="evidence" value="ECO:0007669"/>
    <property type="project" value="UniProtKB-SubCell"/>
</dbReference>
<dbReference type="GO" id="GO:0008236">
    <property type="term" value="F:serine-type peptidase activity"/>
    <property type="evidence" value="ECO:0007669"/>
    <property type="project" value="UniProtKB-KW"/>
</dbReference>
<dbReference type="GO" id="GO:0090729">
    <property type="term" value="F:toxin activity"/>
    <property type="evidence" value="ECO:0007669"/>
    <property type="project" value="UniProtKB-KW"/>
</dbReference>
<dbReference type="GO" id="GO:0006508">
    <property type="term" value="P:proteolysis"/>
    <property type="evidence" value="ECO:0007669"/>
    <property type="project" value="UniProtKB-KW"/>
</dbReference>
<proteinExistence type="evidence at protein level"/>
<keyword id="KW-1203">Blood coagulation cascade inhibiting toxin</keyword>
<keyword id="KW-0903">Direct protein sequencing</keyword>
<keyword id="KW-0325">Glycoprotein</keyword>
<keyword id="KW-1199">Hemostasis impairing toxin</keyword>
<keyword id="KW-0378">Hydrolase</keyword>
<keyword id="KW-0645">Protease</keyword>
<keyword id="KW-0964">Secreted</keyword>
<keyword id="KW-0720">Serine protease</keyword>
<keyword id="KW-0800">Toxin</keyword>
<organism>
    <name type="scientific">Agkistrodon bilineatus</name>
    <name type="common">Cantil</name>
    <name type="synonym">Tropical moccasin</name>
    <dbReference type="NCBI Taxonomy" id="8718"/>
    <lineage>
        <taxon>Eukaryota</taxon>
        <taxon>Metazoa</taxon>
        <taxon>Chordata</taxon>
        <taxon>Craniata</taxon>
        <taxon>Vertebrata</taxon>
        <taxon>Euteleostomi</taxon>
        <taxon>Lepidosauria</taxon>
        <taxon>Squamata</taxon>
        <taxon>Bifurcata</taxon>
        <taxon>Unidentata</taxon>
        <taxon>Episquamata</taxon>
        <taxon>Toxicofera</taxon>
        <taxon>Serpentes</taxon>
        <taxon>Colubroidea</taxon>
        <taxon>Viperidae</taxon>
        <taxon>Crotalinae</taxon>
        <taxon>Agkistrodon</taxon>
    </lineage>
</organism>
<name>VSPCA_AGKBI</name>
<accession>P33588</accession>
<evidence type="ECO:0000250" key="1"/>
<evidence type="ECO:0000255" key="2">
    <source>
        <dbReference type="PROSITE-ProRule" id="PRU00274"/>
    </source>
</evidence>
<evidence type="ECO:0000269" key="3">
    <source>
    </source>
</evidence>
<sequence length="20" mass="2191">VVGGDECNINEHRSLALMYA</sequence>
<reference key="1">
    <citation type="journal article" date="1990" name="Thromb. Res.">
        <title>Isolation and characterization of a protein C activator from tropical moccasin venom.</title>
        <authorList>
            <person name="Nakagaki T."/>
            <person name="Kazim A.L."/>
            <person name="Kisiel W."/>
        </authorList>
    </citation>
    <scope>PROTEIN SEQUENCE</scope>
    <scope>FUNCTION</scope>
    <scope>ACTIVITY REGULATION</scope>
    <scope>BIOPHYSICOCHEMICAL PROPERTIES</scope>
    <scope>GLYCOSYLATION</scope>
    <source>
        <tissue>Venom</tissue>
    </source>
</reference>
<comment type="function">
    <text evidence="3">Snake venom serine protease that selectively cleaves the heavy chain of protein C (PROC). This activation is thrombomodulin-independent.</text>
</comment>
<comment type="activity regulation">
    <text evidence="3">Inhibited by calcium.</text>
</comment>
<comment type="biophysicochemical properties">
    <kinetics>
        <KM evidence="3">1.7 uM for human protein C</KM>
    </kinetics>
</comment>
<comment type="subunit">
    <text evidence="1">Monomer.</text>
</comment>
<comment type="subcellular location">
    <subcellularLocation>
        <location>Secreted</location>
    </subcellularLocation>
</comment>
<comment type="tissue specificity">
    <text>Expressed by the venom gland.</text>
</comment>
<comment type="PTM">
    <text evidence="3">Glycosylated.</text>
</comment>
<comment type="similarity">
    <text evidence="2">Belongs to the peptidase S1 family. Snake venom subfamily.</text>
</comment>
<protein>
    <recommendedName>
        <fullName>Protein C activator</fullName>
        <ecNumber>3.4.21.-</ecNumber>
    </recommendedName>
    <alternativeName>
        <fullName>Snake venom serine protease</fullName>
        <shortName>SVSP</shortName>
    </alternativeName>
</protein>
<feature type="chain" id="PRO_0000088724" description="Protein C activator">
    <location>
        <begin position="1"/>
        <end position="20" status="greater than"/>
    </location>
</feature>
<feature type="domain" description="Peptidase S1" evidence="2">
    <location>
        <begin position="1"/>
        <end position="20" status="greater than"/>
    </location>
</feature>
<feature type="non-terminal residue">
    <location>
        <position position="20"/>
    </location>
</feature>